<comment type="function">
    <text evidence="1">Catalyzes the transfer of a N-acetyl-glucosamine moiety to 1D-myo-inositol 3-phosphate to produce 1D-myo-inositol 2-acetamido-2-deoxy-glucopyranoside 3-phosphate in the mycothiol biosynthesis pathway.</text>
</comment>
<comment type="catalytic activity">
    <reaction evidence="1">
        <text>1D-myo-inositol 3-phosphate + UDP-N-acetyl-alpha-D-glucosamine = 1D-myo-inositol 2-acetamido-2-deoxy-alpha-D-glucopyranoside 3-phosphate + UDP + H(+)</text>
        <dbReference type="Rhea" id="RHEA:26188"/>
        <dbReference type="ChEBI" id="CHEBI:15378"/>
        <dbReference type="ChEBI" id="CHEBI:57705"/>
        <dbReference type="ChEBI" id="CHEBI:58223"/>
        <dbReference type="ChEBI" id="CHEBI:58401"/>
        <dbReference type="ChEBI" id="CHEBI:58892"/>
        <dbReference type="EC" id="2.4.1.250"/>
    </reaction>
</comment>
<comment type="subunit">
    <text evidence="1">Homodimer.</text>
</comment>
<comment type="similarity">
    <text evidence="1">Belongs to the glycosyltransferase group 1 family. MshA subfamily.</text>
</comment>
<reference key="1">
    <citation type="journal article" date="2003" name="Nucleic Acids Res.">
        <title>The complete genome sequence and analysis of Corynebacterium diphtheriae NCTC13129.</title>
        <authorList>
            <person name="Cerdeno-Tarraga A.-M."/>
            <person name="Efstratiou A."/>
            <person name="Dover L.G."/>
            <person name="Holden M.T.G."/>
            <person name="Pallen M.J."/>
            <person name="Bentley S.D."/>
            <person name="Besra G.S."/>
            <person name="Churcher C.M."/>
            <person name="James K.D."/>
            <person name="De Zoysa A."/>
            <person name="Chillingworth T."/>
            <person name="Cronin A."/>
            <person name="Dowd L."/>
            <person name="Feltwell T."/>
            <person name="Hamlin N."/>
            <person name="Holroyd S."/>
            <person name="Jagels K."/>
            <person name="Moule S."/>
            <person name="Quail M.A."/>
            <person name="Rabbinowitsch E."/>
            <person name="Rutherford K.M."/>
            <person name="Thomson N.R."/>
            <person name="Unwin L."/>
            <person name="Whitehead S."/>
            <person name="Barrell B.G."/>
            <person name="Parkhill J."/>
        </authorList>
    </citation>
    <scope>NUCLEOTIDE SEQUENCE [LARGE SCALE GENOMIC DNA]</scope>
    <source>
        <strain>ATCC 700971 / NCTC 13129 / Biotype gravis</strain>
    </source>
</reference>
<evidence type="ECO:0000255" key="1">
    <source>
        <dbReference type="HAMAP-Rule" id="MF_01695"/>
    </source>
</evidence>
<sequence length="427" mass="46352">MMTMRIAMISIHTSPLQQPGSGDAGGMNVYIISIARELARRGVDVDIYTRATRPSQGDVVEVESGLRVINIVAGPYEGLSKEELPTQLAAFAGGVVQFAKCHHMRYDVIHSHYWLSGQVGWLLRDLWNIPLVHTAHTLAAVKNAHRSAGDTEESEARRICEQQLVDNADILVVNTPEETNDLVRHYDANPDSVAVIAPGANVELFTPGTQRNTEQSRRCLGIPLHTKVMAFVGRLQQFKGPEVLLRAVAEMLERDPDRDMRVIMCGGPSGAAATVEHYIELTRSLGIAHRVRFLDPRPPEELVSVYQAADVVAVPSYNESFGLVAMEAQASGTPVVAARVGGLPIAVVDGETGVLVDGHDPIMWADALEQLLDDDPTRQQMGVAAVEHAANFTWAAAAEKLESVYGDAAMLDVAQCHDRYAAGSDRA</sequence>
<protein>
    <recommendedName>
        <fullName>D-inositol 3-phosphate glycosyltransferase</fullName>
        <ecNumber evidence="1">2.4.1.250</ecNumber>
    </recommendedName>
    <alternativeName>
        <fullName evidence="1">N-acetylglucosamine-inositol-phosphate N-acetylglucosaminyltransferase</fullName>
        <shortName evidence="1">GlcNAc-Ins-P N-acetylglucosaminyltransferase</shortName>
    </alternativeName>
</protein>
<accession>Q6NJL3</accession>
<organism>
    <name type="scientific">Corynebacterium diphtheriae (strain ATCC 700971 / NCTC 13129 / Biotype gravis)</name>
    <dbReference type="NCBI Taxonomy" id="257309"/>
    <lineage>
        <taxon>Bacteria</taxon>
        <taxon>Bacillati</taxon>
        <taxon>Actinomycetota</taxon>
        <taxon>Actinomycetes</taxon>
        <taxon>Mycobacteriales</taxon>
        <taxon>Corynebacteriaceae</taxon>
        <taxon>Corynebacterium</taxon>
    </lineage>
</organism>
<keyword id="KW-0328">Glycosyltransferase</keyword>
<keyword id="KW-0460">Magnesium</keyword>
<keyword id="KW-0479">Metal-binding</keyword>
<keyword id="KW-1185">Reference proteome</keyword>
<keyword id="KW-0808">Transferase</keyword>
<dbReference type="EC" id="2.4.1.250" evidence="1"/>
<dbReference type="EMBL" id="BX248355">
    <property type="protein sequence ID" value="CAE48892.1"/>
    <property type="molecule type" value="Genomic_DNA"/>
</dbReference>
<dbReference type="SMR" id="Q6NJL3"/>
<dbReference type="STRING" id="257309.DIP0388"/>
<dbReference type="CAZy" id="GT4">
    <property type="family name" value="Glycosyltransferase Family 4"/>
</dbReference>
<dbReference type="DNASU" id="2650670"/>
<dbReference type="KEGG" id="cdi:DIP0388"/>
<dbReference type="HOGENOM" id="CLU_009583_2_3_11"/>
<dbReference type="Proteomes" id="UP000002198">
    <property type="component" value="Chromosome"/>
</dbReference>
<dbReference type="GO" id="GO:0008375">
    <property type="term" value="F:acetylglucosaminyltransferase activity"/>
    <property type="evidence" value="ECO:0007669"/>
    <property type="project" value="UniProtKB-UniRule"/>
</dbReference>
<dbReference type="GO" id="GO:0102710">
    <property type="term" value="F:D-inositol-3-phosphate glycosyltransferase activity"/>
    <property type="evidence" value="ECO:0007669"/>
    <property type="project" value="UniProtKB-EC"/>
</dbReference>
<dbReference type="GO" id="GO:0000287">
    <property type="term" value="F:magnesium ion binding"/>
    <property type="evidence" value="ECO:0007669"/>
    <property type="project" value="UniProtKB-UniRule"/>
</dbReference>
<dbReference type="GO" id="GO:1903509">
    <property type="term" value="P:liposaccharide metabolic process"/>
    <property type="evidence" value="ECO:0007669"/>
    <property type="project" value="UniProtKB-ARBA"/>
</dbReference>
<dbReference type="GO" id="GO:0010125">
    <property type="term" value="P:mycothiol biosynthetic process"/>
    <property type="evidence" value="ECO:0007669"/>
    <property type="project" value="UniProtKB-UniRule"/>
</dbReference>
<dbReference type="CDD" id="cd03800">
    <property type="entry name" value="GT4_sucrose_synthase"/>
    <property type="match status" value="1"/>
</dbReference>
<dbReference type="Gene3D" id="3.40.50.2000">
    <property type="entry name" value="Glycogen Phosphorylase B"/>
    <property type="match status" value="2"/>
</dbReference>
<dbReference type="HAMAP" id="MF_01695">
    <property type="entry name" value="MshA"/>
    <property type="match status" value="1"/>
</dbReference>
<dbReference type="InterPro" id="IPR001296">
    <property type="entry name" value="Glyco_trans_1"/>
</dbReference>
<dbReference type="InterPro" id="IPR028098">
    <property type="entry name" value="Glyco_trans_4-like_N"/>
</dbReference>
<dbReference type="InterPro" id="IPR050194">
    <property type="entry name" value="Glycosyltransferase_grp1"/>
</dbReference>
<dbReference type="InterPro" id="IPR017814">
    <property type="entry name" value="Mycothiol_biosynthesis_MshA"/>
</dbReference>
<dbReference type="NCBIfam" id="TIGR03449">
    <property type="entry name" value="mycothiol_MshA"/>
    <property type="match status" value="1"/>
</dbReference>
<dbReference type="PANTHER" id="PTHR45947">
    <property type="entry name" value="SULFOQUINOVOSYL TRANSFERASE SQD2"/>
    <property type="match status" value="1"/>
</dbReference>
<dbReference type="PANTHER" id="PTHR45947:SF3">
    <property type="entry name" value="SULFOQUINOVOSYL TRANSFERASE SQD2"/>
    <property type="match status" value="1"/>
</dbReference>
<dbReference type="Pfam" id="PF13579">
    <property type="entry name" value="Glyco_trans_4_4"/>
    <property type="match status" value="1"/>
</dbReference>
<dbReference type="Pfam" id="PF00534">
    <property type="entry name" value="Glycos_transf_1"/>
    <property type="match status" value="1"/>
</dbReference>
<dbReference type="SUPFAM" id="SSF53756">
    <property type="entry name" value="UDP-Glycosyltransferase/glycogen phosphorylase"/>
    <property type="match status" value="1"/>
</dbReference>
<proteinExistence type="inferred from homology"/>
<name>MSHA_CORDI</name>
<feature type="chain" id="PRO_0000400116" description="D-inositol 3-phosphate glycosyltransferase">
    <location>
        <begin position="1"/>
        <end position="427"/>
    </location>
</feature>
<feature type="binding site" evidence="1">
    <location>
        <position position="12"/>
    </location>
    <ligand>
        <name>1D-myo-inositol 3-phosphate</name>
        <dbReference type="ChEBI" id="CHEBI:58401"/>
    </ligand>
</feature>
<feature type="binding site" evidence="1">
    <location>
        <begin position="18"/>
        <end position="19"/>
    </location>
    <ligand>
        <name>UDP-N-acetyl-alpha-D-glucosamine</name>
        <dbReference type="ChEBI" id="CHEBI:57705"/>
    </ligand>
</feature>
<feature type="binding site" evidence="1">
    <location>
        <begin position="23"/>
        <end position="28"/>
    </location>
    <ligand>
        <name>1D-myo-inositol 3-phosphate</name>
        <dbReference type="ChEBI" id="CHEBI:58401"/>
    </ligand>
</feature>
<feature type="binding site" evidence="1">
    <location>
        <position position="26"/>
    </location>
    <ligand>
        <name>UDP-N-acetyl-alpha-D-glucosamine</name>
        <dbReference type="ChEBI" id="CHEBI:57705"/>
    </ligand>
</feature>
<feature type="binding site" evidence="1">
    <location>
        <position position="81"/>
    </location>
    <ligand>
        <name>1D-myo-inositol 3-phosphate</name>
        <dbReference type="ChEBI" id="CHEBI:58401"/>
    </ligand>
</feature>
<feature type="binding site" evidence="1">
    <location>
        <position position="113"/>
    </location>
    <ligand>
        <name>1D-myo-inositol 3-phosphate</name>
        <dbReference type="ChEBI" id="CHEBI:58401"/>
    </ligand>
</feature>
<feature type="binding site" evidence="1">
    <location>
        <position position="137"/>
    </location>
    <ligand>
        <name>1D-myo-inositol 3-phosphate</name>
        <dbReference type="ChEBI" id="CHEBI:58401"/>
    </ligand>
</feature>
<feature type="binding site" evidence="1">
    <location>
        <position position="157"/>
    </location>
    <ligand>
        <name>1D-myo-inositol 3-phosphate</name>
        <dbReference type="ChEBI" id="CHEBI:58401"/>
    </ligand>
</feature>
<feature type="binding site" evidence="1">
    <location>
        <position position="234"/>
    </location>
    <ligand>
        <name>UDP-N-acetyl-alpha-D-glucosamine</name>
        <dbReference type="ChEBI" id="CHEBI:57705"/>
    </ligand>
</feature>
<feature type="binding site" evidence="1">
    <location>
        <position position="239"/>
    </location>
    <ligand>
        <name>UDP-N-acetyl-alpha-D-glucosamine</name>
        <dbReference type="ChEBI" id="CHEBI:57705"/>
    </ligand>
</feature>
<feature type="binding site" evidence="1">
    <location>
        <position position="297"/>
    </location>
    <ligand>
        <name>UDP-N-acetyl-alpha-D-glucosamine</name>
        <dbReference type="ChEBI" id="CHEBI:57705"/>
    </ligand>
</feature>
<feature type="binding site" evidence="1">
    <location>
        <position position="306"/>
    </location>
    <ligand>
        <name>Mg(2+)</name>
        <dbReference type="ChEBI" id="CHEBI:18420"/>
    </ligand>
</feature>
<feature type="binding site" evidence="1">
    <location>
        <position position="307"/>
    </location>
    <ligand>
        <name>Mg(2+)</name>
        <dbReference type="ChEBI" id="CHEBI:18420"/>
    </ligand>
</feature>
<feature type="binding site" evidence="1">
    <location>
        <position position="309"/>
    </location>
    <ligand>
        <name>Mg(2+)</name>
        <dbReference type="ChEBI" id="CHEBI:18420"/>
    </ligand>
</feature>
<feature type="binding site" evidence="1">
    <location>
        <position position="319"/>
    </location>
    <ligand>
        <name>UDP-N-acetyl-alpha-D-glucosamine</name>
        <dbReference type="ChEBI" id="CHEBI:57705"/>
    </ligand>
</feature>
<feature type="binding site" evidence="1">
    <location>
        <position position="327"/>
    </location>
    <ligand>
        <name>UDP-N-acetyl-alpha-D-glucosamine</name>
        <dbReference type="ChEBI" id="CHEBI:57705"/>
    </ligand>
</feature>
<feature type="binding site" evidence="1">
    <location>
        <position position="333"/>
    </location>
    <ligand>
        <name>Mg(2+)</name>
        <dbReference type="ChEBI" id="CHEBI:18420"/>
    </ligand>
</feature>
<gene>
    <name evidence="1" type="primary">mshA</name>
    <name type="ordered locus">DIP0388</name>
</gene>